<proteinExistence type="inferred from homology"/>
<organism>
    <name type="scientific">Mus musculus</name>
    <name type="common">Mouse</name>
    <dbReference type="NCBI Taxonomy" id="10090"/>
    <lineage>
        <taxon>Eukaryota</taxon>
        <taxon>Metazoa</taxon>
        <taxon>Chordata</taxon>
        <taxon>Craniata</taxon>
        <taxon>Vertebrata</taxon>
        <taxon>Euteleostomi</taxon>
        <taxon>Mammalia</taxon>
        <taxon>Eutheria</taxon>
        <taxon>Euarchontoglires</taxon>
        <taxon>Glires</taxon>
        <taxon>Rodentia</taxon>
        <taxon>Myomorpha</taxon>
        <taxon>Muroidea</taxon>
        <taxon>Muridae</taxon>
        <taxon>Murinae</taxon>
        <taxon>Mus</taxon>
        <taxon>Mus</taxon>
    </lineage>
</organism>
<sequence>MHPDLSPHLHTEECNVLINLLKECHKNHNILKFFGHCNDLDREMRKCLKNEYSERRTRSREHGAAMRRRLSDPPEEAGR</sequence>
<keyword id="KW-1015">Disulfide bond</keyword>
<keyword id="KW-0496">Mitochondrion</keyword>
<keyword id="KW-1185">Reference proteome</keyword>
<protein>
    <recommendedName>
        <fullName>COX assembly mitochondrial protein 2 homolog</fullName>
    </recommendedName>
</protein>
<feature type="chain" id="PRO_0000192944" description="COX assembly mitochondrial protein 2 homolog">
    <location>
        <begin position="1"/>
        <end position="79"/>
    </location>
</feature>
<feature type="domain" description="CHCH" evidence="2">
    <location>
        <begin position="11"/>
        <end position="55"/>
    </location>
</feature>
<feature type="region of interest" description="Disordered" evidence="3">
    <location>
        <begin position="50"/>
        <end position="79"/>
    </location>
</feature>
<feature type="short sequence motif" description="Cx9C motif 1" evidence="2">
    <location>
        <begin position="14"/>
        <end position="24"/>
    </location>
</feature>
<feature type="short sequence motif" description="Cx9C motif 2" evidence="2">
    <location>
        <begin position="37"/>
        <end position="47"/>
    </location>
</feature>
<feature type="disulfide bond" evidence="2">
    <location>
        <begin position="14"/>
        <end position="47"/>
    </location>
</feature>
<feature type="disulfide bond" evidence="2">
    <location>
        <begin position="24"/>
        <end position="37"/>
    </location>
</feature>
<evidence type="ECO:0000250" key="1"/>
<evidence type="ECO:0000255" key="2">
    <source>
        <dbReference type="PROSITE-ProRule" id="PRU01150"/>
    </source>
</evidence>
<evidence type="ECO:0000256" key="3">
    <source>
        <dbReference type="SAM" id="MobiDB-lite"/>
    </source>
</evidence>
<evidence type="ECO:0000305" key="4"/>
<comment type="function">
    <text evidence="1">May be involved in cytochrome c oxidase biogenesis.</text>
</comment>
<comment type="subcellular location">
    <subcellularLocation>
        <location evidence="1">Mitochondrion</location>
    </subcellularLocation>
</comment>
<comment type="similarity">
    <text evidence="4">Belongs to the CMC family.</text>
</comment>
<name>COXM2_MOUSE</name>
<dbReference type="EMBL" id="AK002429">
    <property type="protein sequence ID" value="BAC24989.1"/>
    <property type="molecule type" value="mRNA"/>
</dbReference>
<dbReference type="EMBL" id="AK013475">
    <property type="protein sequence ID" value="BAC25407.1"/>
    <property type="molecule type" value="mRNA"/>
</dbReference>
<dbReference type="EMBL" id="BC027549">
    <property type="protein sequence ID" value="AAH27549.1"/>
    <property type="molecule type" value="mRNA"/>
</dbReference>
<dbReference type="CCDS" id="CCDS40489.1"/>
<dbReference type="RefSeq" id="NP_081120.2">
    <property type="nucleotide sequence ID" value="NM_026844.3"/>
</dbReference>
<dbReference type="RefSeq" id="XP_006531345.1">
    <property type="nucleotide sequence ID" value="XM_006531282.3"/>
</dbReference>
<dbReference type="RefSeq" id="XP_011246787.1">
    <property type="nucleotide sequence ID" value="XM_011248485.3"/>
</dbReference>
<dbReference type="SMR" id="Q8K199"/>
<dbReference type="BioGRID" id="211539">
    <property type="interactions" value="2"/>
</dbReference>
<dbReference type="FunCoup" id="Q8K199">
    <property type="interactions" value="704"/>
</dbReference>
<dbReference type="STRING" id="10090.ENSMUSP00000120966"/>
<dbReference type="GlyGen" id="Q8K199">
    <property type="glycosylation" value="1 site, 1 O-linked glycan (1 site)"/>
</dbReference>
<dbReference type="iPTMnet" id="Q8K199"/>
<dbReference type="PhosphoSitePlus" id="Q8K199"/>
<dbReference type="PaxDb" id="10090-ENSMUSP00000120966"/>
<dbReference type="PeptideAtlas" id="Q8K199"/>
<dbReference type="ProteomicsDB" id="277999"/>
<dbReference type="Pumba" id="Q8K199"/>
<dbReference type="DNASU" id="66531"/>
<dbReference type="Ensembl" id="ENSMUST00000148235.8">
    <property type="protein sequence ID" value="ENSMUSP00000120966.2"/>
    <property type="gene ID" value="ENSMUSG00000014633.16"/>
</dbReference>
<dbReference type="GeneID" id="66531"/>
<dbReference type="KEGG" id="mmu:66531"/>
<dbReference type="UCSC" id="uc009nom.1">
    <property type="organism name" value="mouse"/>
</dbReference>
<dbReference type="AGR" id="MGI:1913781"/>
<dbReference type="CTD" id="56942"/>
<dbReference type="MGI" id="MGI:1913781">
    <property type="gene designation" value="Cmc2"/>
</dbReference>
<dbReference type="VEuPathDB" id="HostDB:ENSMUSG00000014633"/>
<dbReference type="eggNOG" id="KOG4148">
    <property type="taxonomic scope" value="Eukaryota"/>
</dbReference>
<dbReference type="GeneTree" id="ENSGT01000000214745"/>
<dbReference type="HOGENOM" id="CLU_169286_2_0_1"/>
<dbReference type="InParanoid" id="Q8K199"/>
<dbReference type="OMA" id="CHKEHNF"/>
<dbReference type="OrthoDB" id="14562at9989"/>
<dbReference type="TreeFam" id="TF314049"/>
<dbReference type="BioGRID-ORCS" id="66531">
    <property type="hits" value="3 hits in 77 CRISPR screens"/>
</dbReference>
<dbReference type="ChiTaRS" id="Cmc2">
    <property type="organism name" value="mouse"/>
</dbReference>
<dbReference type="PRO" id="PR:Q8K199"/>
<dbReference type="Proteomes" id="UP000000589">
    <property type="component" value="Chromosome 8"/>
</dbReference>
<dbReference type="RNAct" id="Q8K199">
    <property type="molecule type" value="protein"/>
</dbReference>
<dbReference type="Bgee" id="ENSMUSG00000014633">
    <property type="expression patterns" value="Expressed in ileal epithelium and 267 other cell types or tissues"/>
</dbReference>
<dbReference type="ExpressionAtlas" id="Q8K199">
    <property type="expression patterns" value="baseline and differential"/>
</dbReference>
<dbReference type="GO" id="GO:0005829">
    <property type="term" value="C:cytosol"/>
    <property type="evidence" value="ECO:0007669"/>
    <property type="project" value="Ensembl"/>
</dbReference>
<dbReference type="GO" id="GO:0005739">
    <property type="term" value="C:mitochondrion"/>
    <property type="evidence" value="ECO:0000250"/>
    <property type="project" value="UniProtKB"/>
</dbReference>
<dbReference type="InterPro" id="IPR013892">
    <property type="entry name" value="Cyt_c_biogenesis_Cmc1-like"/>
</dbReference>
<dbReference type="PANTHER" id="PTHR22977">
    <property type="entry name" value="COX ASSEMBLY MITOCHONDRIAL PROTEIN"/>
    <property type="match status" value="1"/>
</dbReference>
<dbReference type="PANTHER" id="PTHR22977:SF1">
    <property type="entry name" value="COX ASSEMBLY MITOCHONDRIAL PROTEIN 2 HOMOLOG"/>
    <property type="match status" value="1"/>
</dbReference>
<dbReference type="Pfam" id="PF08583">
    <property type="entry name" value="Cmc1"/>
    <property type="match status" value="1"/>
</dbReference>
<dbReference type="PROSITE" id="PS51808">
    <property type="entry name" value="CHCH"/>
    <property type="match status" value="1"/>
</dbReference>
<accession>Q8K199</accession>
<accession>Q8CEV6</accession>
<reference key="1">
    <citation type="journal article" date="2005" name="Science">
        <title>The transcriptional landscape of the mammalian genome.</title>
        <authorList>
            <person name="Carninci P."/>
            <person name="Kasukawa T."/>
            <person name="Katayama S."/>
            <person name="Gough J."/>
            <person name="Frith M.C."/>
            <person name="Maeda N."/>
            <person name="Oyama R."/>
            <person name="Ravasi T."/>
            <person name="Lenhard B."/>
            <person name="Wells C."/>
            <person name="Kodzius R."/>
            <person name="Shimokawa K."/>
            <person name="Bajic V.B."/>
            <person name="Brenner S.E."/>
            <person name="Batalov S."/>
            <person name="Forrest A.R."/>
            <person name="Zavolan M."/>
            <person name="Davis M.J."/>
            <person name="Wilming L.G."/>
            <person name="Aidinis V."/>
            <person name="Allen J.E."/>
            <person name="Ambesi-Impiombato A."/>
            <person name="Apweiler R."/>
            <person name="Aturaliya R.N."/>
            <person name="Bailey T.L."/>
            <person name="Bansal M."/>
            <person name="Baxter L."/>
            <person name="Beisel K.W."/>
            <person name="Bersano T."/>
            <person name="Bono H."/>
            <person name="Chalk A.M."/>
            <person name="Chiu K.P."/>
            <person name="Choudhary V."/>
            <person name="Christoffels A."/>
            <person name="Clutterbuck D.R."/>
            <person name="Crowe M.L."/>
            <person name="Dalla E."/>
            <person name="Dalrymple B.P."/>
            <person name="de Bono B."/>
            <person name="Della Gatta G."/>
            <person name="di Bernardo D."/>
            <person name="Down T."/>
            <person name="Engstrom P."/>
            <person name="Fagiolini M."/>
            <person name="Faulkner G."/>
            <person name="Fletcher C.F."/>
            <person name="Fukushima T."/>
            <person name="Furuno M."/>
            <person name="Futaki S."/>
            <person name="Gariboldi M."/>
            <person name="Georgii-Hemming P."/>
            <person name="Gingeras T.R."/>
            <person name="Gojobori T."/>
            <person name="Green R.E."/>
            <person name="Gustincich S."/>
            <person name="Harbers M."/>
            <person name="Hayashi Y."/>
            <person name="Hensch T.K."/>
            <person name="Hirokawa N."/>
            <person name="Hill D."/>
            <person name="Huminiecki L."/>
            <person name="Iacono M."/>
            <person name="Ikeo K."/>
            <person name="Iwama A."/>
            <person name="Ishikawa T."/>
            <person name="Jakt M."/>
            <person name="Kanapin A."/>
            <person name="Katoh M."/>
            <person name="Kawasawa Y."/>
            <person name="Kelso J."/>
            <person name="Kitamura H."/>
            <person name="Kitano H."/>
            <person name="Kollias G."/>
            <person name="Krishnan S.P."/>
            <person name="Kruger A."/>
            <person name="Kummerfeld S.K."/>
            <person name="Kurochkin I.V."/>
            <person name="Lareau L.F."/>
            <person name="Lazarevic D."/>
            <person name="Lipovich L."/>
            <person name="Liu J."/>
            <person name="Liuni S."/>
            <person name="McWilliam S."/>
            <person name="Madan Babu M."/>
            <person name="Madera M."/>
            <person name="Marchionni L."/>
            <person name="Matsuda H."/>
            <person name="Matsuzawa S."/>
            <person name="Miki H."/>
            <person name="Mignone F."/>
            <person name="Miyake S."/>
            <person name="Morris K."/>
            <person name="Mottagui-Tabar S."/>
            <person name="Mulder N."/>
            <person name="Nakano N."/>
            <person name="Nakauchi H."/>
            <person name="Ng P."/>
            <person name="Nilsson R."/>
            <person name="Nishiguchi S."/>
            <person name="Nishikawa S."/>
            <person name="Nori F."/>
            <person name="Ohara O."/>
            <person name="Okazaki Y."/>
            <person name="Orlando V."/>
            <person name="Pang K.C."/>
            <person name="Pavan W.J."/>
            <person name="Pavesi G."/>
            <person name="Pesole G."/>
            <person name="Petrovsky N."/>
            <person name="Piazza S."/>
            <person name="Reed J."/>
            <person name="Reid J.F."/>
            <person name="Ring B.Z."/>
            <person name="Ringwald M."/>
            <person name="Rost B."/>
            <person name="Ruan Y."/>
            <person name="Salzberg S.L."/>
            <person name="Sandelin A."/>
            <person name="Schneider C."/>
            <person name="Schoenbach C."/>
            <person name="Sekiguchi K."/>
            <person name="Semple C.A."/>
            <person name="Seno S."/>
            <person name="Sessa L."/>
            <person name="Sheng Y."/>
            <person name="Shibata Y."/>
            <person name="Shimada H."/>
            <person name="Shimada K."/>
            <person name="Silva D."/>
            <person name="Sinclair B."/>
            <person name="Sperling S."/>
            <person name="Stupka E."/>
            <person name="Sugiura K."/>
            <person name="Sultana R."/>
            <person name="Takenaka Y."/>
            <person name="Taki K."/>
            <person name="Tammoja K."/>
            <person name="Tan S.L."/>
            <person name="Tang S."/>
            <person name="Taylor M.S."/>
            <person name="Tegner J."/>
            <person name="Teichmann S.A."/>
            <person name="Ueda H.R."/>
            <person name="van Nimwegen E."/>
            <person name="Verardo R."/>
            <person name="Wei C.L."/>
            <person name="Yagi K."/>
            <person name="Yamanishi H."/>
            <person name="Zabarovsky E."/>
            <person name="Zhu S."/>
            <person name="Zimmer A."/>
            <person name="Hide W."/>
            <person name="Bult C."/>
            <person name="Grimmond S.M."/>
            <person name="Teasdale R.D."/>
            <person name="Liu E.T."/>
            <person name="Brusic V."/>
            <person name="Quackenbush J."/>
            <person name="Wahlestedt C."/>
            <person name="Mattick J.S."/>
            <person name="Hume D.A."/>
            <person name="Kai C."/>
            <person name="Sasaki D."/>
            <person name="Tomaru Y."/>
            <person name="Fukuda S."/>
            <person name="Kanamori-Katayama M."/>
            <person name="Suzuki M."/>
            <person name="Aoki J."/>
            <person name="Arakawa T."/>
            <person name="Iida J."/>
            <person name="Imamura K."/>
            <person name="Itoh M."/>
            <person name="Kato T."/>
            <person name="Kawaji H."/>
            <person name="Kawagashira N."/>
            <person name="Kawashima T."/>
            <person name="Kojima M."/>
            <person name="Kondo S."/>
            <person name="Konno H."/>
            <person name="Nakano K."/>
            <person name="Ninomiya N."/>
            <person name="Nishio T."/>
            <person name="Okada M."/>
            <person name="Plessy C."/>
            <person name="Shibata K."/>
            <person name="Shiraki T."/>
            <person name="Suzuki S."/>
            <person name="Tagami M."/>
            <person name="Waki K."/>
            <person name="Watahiki A."/>
            <person name="Okamura-Oho Y."/>
            <person name="Suzuki H."/>
            <person name="Kawai J."/>
            <person name="Hayashizaki Y."/>
        </authorList>
    </citation>
    <scope>NUCLEOTIDE SEQUENCE [LARGE SCALE MRNA]</scope>
    <source>
        <strain>C57BL/6J</strain>
        <tissue>Hippocampus</tissue>
        <tissue>Kidney</tissue>
    </source>
</reference>
<reference key="2">
    <citation type="journal article" date="2004" name="Genome Res.">
        <title>The status, quality, and expansion of the NIH full-length cDNA project: the Mammalian Gene Collection (MGC).</title>
        <authorList>
            <consortium name="The MGC Project Team"/>
        </authorList>
    </citation>
    <scope>NUCLEOTIDE SEQUENCE [LARGE SCALE MRNA]</scope>
    <source>
        <tissue>Mammary gland</tissue>
    </source>
</reference>
<gene>
    <name type="primary">Cmc2</name>
</gene>